<dbReference type="EMBL" id="M96854">
    <property type="status" value="NOT_ANNOTATED_CDS"/>
    <property type="molecule type" value="Genomic_DNA"/>
</dbReference>
<dbReference type="PIR" id="A42745">
    <property type="entry name" value="FOMVMU"/>
</dbReference>
<dbReference type="BMRB" id="P32594"/>
<dbReference type="SMR" id="P32594"/>
<dbReference type="GO" id="GO:0020002">
    <property type="term" value="C:host cell plasma membrane"/>
    <property type="evidence" value="ECO:0007669"/>
    <property type="project" value="UniProtKB-SubCell"/>
</dbReference>
<dbReference type="GO" id="GO:0016020">
    <property type="term" value="C:membrane"/>
    <property type="evidence" value="ECO:0007669"/>
    <property type="project" value="UniProtKB-KW"/>
</dbReference>
<dbReference type="GO" id="GO:0019013">
    <property type="term" value="C:viral nucleocapsid"/>
    <property type="evidence" value="ECO:0007669"/>
    <property type="project" value="UniProtKB-KW"/>
</dbReference>
<dbReference type="GO" id="GO:0003723">
    <property type="term" value="F:RNA binding"/>
    <property type="evidence" value="ECO:0007669"/>
    <property type="project" value="UniProtKB-KW"/>
</dbReference>
<dbReference type="GO" id="GO:0039660">
    <property type="term" value="F:structural constituent of virion"/>
    <property type="evidence" value="ECO:0007669"/>
    <property type="project" value="UniProtKB-KW"/>
</dbReference>
<dbReference type="GO" id="GO:0039702">
    <property type="term" value="P:viral budding via host ESCRT complex"/>
    <property type="evidence" value="ECO:0007669"/>
    <property type="project" value="UniProtKB-KW"/>
</dbReference>
<dbReference type="FunFam" id="1.10.150.180:FF:000001">
    <property type="entry name" value="Gag polyprotein"/>
    <property type="match status" value="1"/>
</dbReference>
<dbReference type="Gene3D" id="1.10.150.180">
    <property type="entry name" value="Gamma-retroviral matrix domain"/>
    <property type="match status" value="1"/>
</dbReference>
<dbReference type="Gene3D" id="1.10.375.10">
    <property type="entry name" value="Human Immunodeficiency Virus Type 1 Capsid Protein"/>
    <property type="match status" value="1"/>
</dbReference>
<dbReference type="InterPro" id="IPR000840">
    <property type="entry name" value="G_retro_matrix"/>
</dbReference>
<dbReference type="InterPro" id="IPR036946">
    <property type="entry name" value="G_retro_matrix_sf"/>
</dbReference>
<dbReference type="InterPro" id="IPR002079">
    <property type="entry name" value="Gag_p12"/>
</dbReference>
<dbReference type="InterPro" id="IPR003036">
    <property type="entry name" value="Gag_P30"/>
</dbReference>
<dbReference type="InterPro" id="IPR008919">
    <property type="entry name" value="Retrov_capsid_N"/>
</dbReference>
<dbReference type="InterPro" id="IPR050462">
    <property type="entry name" value="Retroviral_Gag-Pol_poly"/>
</dbReference>
<dbReference type="InterPro" id="IPR010999">
    <property type="entry name" value="Retrovr_matrix"/>
</dbReference>
<dbReference type="PANTHER" id="PTHR33166">
    <property type="entry name" value="GAG_P30 DOMAIN-CONTAINING PROTEIN"/>
    <property type="match status" value="1"/>
</dbReference>
<dbReference type="Pfam" id="PF01140">
    <property type="entry name" value="Gag_MA"/>
    <property type="match status" value="1"/>
</dbReference>
<dbReference type="Pfam" id="PF01141">
    <property type="entry name" value="Gag_p12"/>
    <property type="match status" value="1"/>
</dbReference>
<dbReference type="Pfam" id="PF02093">
    <property type="entry name" value="Gag_p30"/>
    <property type="match status" value="1"/>
</dbReference>
<dbReference type="SUPFAM" id="SSF47836">
    <property type="entry name" value="Retroviral matrix proteins"/>
    <property type="match status" value="1"/>
</dbReference>
<dbReference type="SUPFAM" id="SSF47943">
    <property type="entry name" value="Retrovirus capsid protein, N-terminal core domain"/>
    <property type="match status" value="1"/>
</dbReference>
<accession>P32594</accession>
<proteinExistence type="inferred from homology"/>
<organismHost>
    <name type="scientific">Mus musculus</name>
    <name type="common">Mouse</name>
    <dbReference type="NCBI Taxonomy" id="10090"/>
</organismHost>
<gene>
    <name type="primary">gag</name>
</gene>
<protein>
    <recommendedName>
        <fullName>Gag polyprotein</fullName>
    </recommendedName>
    <alternativeName>
        <fullName>Core polyprotein</fullName>
    </alternativeName>
    <component>
        <recommendedName>
            <fullName>Matrix protein p15</fullName>
            <shortName>MA</shortName>
        </recommendedName>
    </component>
    <component>
        <recommendedName>
            <fullName>RNA-binding phosphoprotein p12</fullName>
        </recommendedName>
        <alternativeName>
            <fullName>pp12</fullName>
        </alternativeName>
    </component>
    <component>
        <recommendedName>
            <fullName>Capsid protein p30</fullName>
            <shortName>CA</shortName>
        </recommendedName>
    </component>
</protein>
<evidence type="ECO:0000250" key="1"/>
<evidence type="ECO:0000250" key="2">
    <source>
        <dbReference type="UniProtKB" id="P03332"/>
    </source>
</evidence>
<evidence type="ECO:0000250" key="3">
    <source>
        <dbReference type="UniProtKB" id="P03336"/>
    </source>
</evidence>
<evidence type="ECO:0000255" key="4"/>
<evidence type="ECO:0000256" key="5">
    <source>
        <dbReference type="SAM" id="MobiDB-lite"/>
    </source>
</evidence>
<evidence type="ECO:0000305" key="6"/>
<comment type="function">
    <molecule>Gag polyprotein</molecule>
    <text evidence="2">Plays a role in budding and is processed by the viral protease during virion maturation outside the cell. During budding, it recruits, in a PPXY-dependent or independent manner, Nedd4-like ubiquitin ligases that conjugate ubiquitin molecules to Gag, or to Gag binding host factors. Interaction with HECT ubiquitin ligases probably links the viral protein to the host ESCRT pathway and facilitates release.</text>
</comment>
<comment type="function">
    <molecule>Matrix protein p15</molecule>
    <text evidence="2">Targets Gag and gag-pol polyproteins to the plasma membrane via a multipartite membrane binding signal, that includes its myristoylated N-terminus. Also mediates nuclear localization of the pre-integration complex.</text>
</comment>
<comment type="function">
    <molecule>RNA-binding phosphoprotein p12</molecule>
    <text evidence="2">Constituent of the pre-integration complex (PIC) which tethers the latter to mitotic chromosomes.</text>
</comment>
<comment type="function">
    <molecule>Capsid protein p30</molecule>
    <text evidence="2">Forms the spherical core of the virion that encapsulates the genomic RNA-nucleocapsid complex.</text>
</comment>
<comment type="subunit">
    <molecule>Gag polyprotein</molecule>
    <text evidence="2">Interacts (via PPXY motif) with host NEDD4 (By similarity). Interacts (via PSAP motif) with host TSG101 (By similarity). Interacts (via LYPX(n)L motif) with host PDCD6IP (By similarity).</text>
</comment>
<comment type="subunit">
    <molecule>Capsid protein p30</molecule>
    <text evidence="2 3">Homohexamer. Further associates as homomultimer (By similarity). The virus core is composed of a lattice formed from hexagonal rings, each containing six capsid monomers (By similarity). Interacts with mouse UBE2I and mouse PIAS4 (By similarity).</text>
</comment>
<comment type="subcellular location">
    <molecule>Gag polyprotein</molecule>
    <subcellularLocation>
        <location evidence="1">Virion</location>
    </subcellularLocation>
    <subcellularLocation>
        <location evidence="6">Host cell membrane</location>
        <topology evidence="6">Lipid-anchor</topology>
    </subcellularLocation>
</comment>
<comment type="subcellular location">
    <molecule>Matrix protein p15</molecule>
    <subcellularLocation>
        <location evidence="6">Virion</location>
    </subcellularLocation>
</comment>
<comment type="subcellular location">
    <molecule>Capsid protein p30</molecule>
    <subcellularLocation>
        <location evidence="6">Virion</location>
    </subcellularLocation>
</comment>
<comment type="domain">
    <molecule>Gag polyprotein</molecule>
    <text evidence="2">Late-budding domains (L domains) are short sequence motifs essential for viral particle budding. They recruit proteins of the host ESCRT machinery (Endosomal Sorting Complex Required for Transport) or ESCRT-associated proteins. RNA-binding phosphoprotein p12 contains one L domain: a PPXY motif which interacts with the WW domain 3 of NEDD4 E3 ubiquitin ligase. PPXY motif is essential for virus egress. Matrix protein p15 contains one L domain: a PTAP/PSAP motif, which interacts with the UEV domain of TSG101. The junction between the matrix protein p15 and RNA-binding phosphoprotein p12 also contains one L domain: a LYPX(n)L motif which interacts with PDCD6IP. Both PSAP and LYPX(n)L domains might play little to no role in budding and possibly drive residual virus release.</text>
</comment>
<comment type="PTM">
    <molecule>Gag polyprotein</molecule>
    <text evidence="2">Specific enzymatic cleavages by the viral protease yield mature proteins. The protease is released by autocatalytic cleavage. The polyprotein is cleaved during and after budding, this process is termed maturation.</text>
</comment>
<comment type="miscellaneous">
    <text>This protein is probably translated as a Gag-Mos polyprotein.</text>
</comment>
<name>GAG_MSVMT</name>
<keyword id="KW-0167">Capsid protein</keyword>
<keyword id="KW-1032">Host cell membrane</keyword>
<keyword id="KW-1043">Host membrane</keyword>
<keyword id="KW-0945">Host-virus interaction</keyword>
<keyword id="KW-0449">Lipoprotein</keyword>
<keyword id="KW-0472">Membrane</keyword>
<keyword id="KW-0519">Myristate</keyword>
<keyword id="KW-0694">RNA-binding</keyword>
<keyword id="KW-1198">Viral budding</keyword>
<keyword id="KW-1187">Viral budding via the host ESCRT complexes</keyword>
<keyword id="KW-0468">Viral matrix protein</keyword>
<keyword id="KW-0543">Viral nucleoprotein</keyword>
<keyword id="KW-1188">Viral release from host cell</keyword>
<keyword id="KW-0946">Virion</keyword>
<feature type="initiator methionine" description="Removed; by host" evidence="1">
    <location>
        <position position="1"/>
    </location>
</feature>
<feature type="chain" id="PRO_0000390819" description="Gag polyprotein">
    <location>
        <begin position="2"/>
        <end position="468"/>
    </location>
</feature>
<feature type="chain" id="PRO_0000040953" description="Matrix protein p15" evidence="4">
    <location>
        <begin position="2"/>
        <end position="131"/>
    </location>
</feature>
<feature type="chain" id="PRO_0000040954" description="RNA-binding phosphoprotein p12" evidence="4">
    <location>
        <begin position="132"/>
        <end position="215"/>
    </location>
</feature>
<feature type="chain" id="PRO_0000040955" description="Capsid protein p30" evidence="4">
    <location>
        <begin position="216"/>
        <end position="468"/>
    </location>
</feature>
<feature type="region of interest" description="Disordered" evidence="5">
    <location>
        <begin position="111"/>
        <end position="222"/>
    </location>
</feature>
<feature type="region of interest" description="Disordered" evidence="5">
    <location>
        <begin position="434"/>
        <end position="455"/>
    </location>
</feature>
<feature type="short sequence motif" description="PTAP/PSAP motif">
    <location>
        <begin position="111"/>
        <end position="114"/>
    </location>
</feature>
<feature type="short sequence motif" description="LYPX(n)L motif">
    <location>
        <begin position="130"/>
        <end position="134"/>
    </location>
</feature>
<feature type="short sequence motif" description="PPXY motif">
    <location>
        <begin position="162"/>
        <end position="165"/>
    </location>
</feature>
<feature type="compositionally biased region" description="Basic and acidic residues" evidence="5">
    <location>
        <begin position="163"/>
        <end position="178"/>
    </location>
</feature>
<feature type="site" description="Cleavage; by viral protease" evidence="1">
    <location>
        <begin position="131"/>
        <end position="132"/>
    </location>
</feature>
<feature type="site" description="Cleavage; by viral protease" evidence="1">
    <location>
        <begin position="215"/>
        <end position="216"/>
    </location>
</feature>
<feature type="lipid moiety-binding region" description="N-myristoyl glycine; by host" evidence="1">
    <location>
        <position position="2"/>
    </location>
</feature>
<reference key="1">
    <citation type="journal article" date="1992" name="J. Virol.">
        <title>Moloney murine sarcoma virus MuSVts110 DNA: cloning, nucleotide sequence, and gene expression.</title>
        <authorList>
            <person name="Huai L."/>
            <person name="Chiocca S.M."/>
            <person name="Gilbreth M.A."/>
            <person name="Ainsworth J.R."/>
            <person name="Bishop L.A."/>
            <person name="Murphy E.C. Jr."/>
        </authorList>
    </citation>
    <scope>NUCLEOTIDE SEQUENCE [GENOMIC DNA]</scope>
</reference>
<sequence length="468" mass="52681">MGQTVTTPLSLTLDHWKDVERIAHNQSVDVKKRRWVTFCSAEWPTFNVGWPRDGTFNRDLITQVKIKVFSPGPHGHPDQVPYIVTWEALAFDPPPWVKPFVHPKPPPPLLPSAPSLPLEPPLSTPPQSSLYPALTPSLGAKPKPQVLSDSGGPLIDLLTEDPPPYRDPRPPPSDRDGDSGEATPAGEAPDPSPMASRLRGRREPPVADSTTSQAFPLRTGGNGQLQYWPFSSSDLYNWKSNNPSFSEDPGKLTALIESVLITHQPTWDDCQQLLGTLLTGEEKQRVLLEARKAVRGDDGRPTQLPNEVDAAFPLERPDWEYTTQAGRNHLVHYRQLLIAGLQNAGRSPTNLAKVKGITQGPNESPSAFLERLKEAYRRYTPYDPEDPGQETNVSMSFIWQSAPDIGRKLERLEDLRNKTLGDLVREAERIFNKRETPEEREERIRREREEKEERHAPKLPWLFLIISP</sequence>
<organism>
    <name type="scientific">Moloney murine sarcoma virus (strain ts110)</name>
    <name type="common">MoMSV</name>
    <dbReference type="NCBI Taxonomy" id="31691"/>
    <lineage>
        <taxon>Viruses</taxon>
        <taxon>Riboviria</taxon>
        <taxon>Pararnavirae</taxon>
        <taxon>Artverviricota</taxon>
        <taxon>Revtraviricetes</taxon>
        <taxon>Ortervirales</taxon>
        <taxon>Retroviridae</taxon>
        <taxon>Orthoretrovirinae</taxon>
        <taxon>Gammaretrovirus</taxon>
        <taxon>Moloney murine sarcoma virus</taxon>
    </lineage>
</organism>